<proteinExistence type="inferred from homology"/>
<comment type="similarity">
    <text evidence="1">Belongs to the bacterial ribosomal protein bS16 family.</text>
</comment>
<organism>
    <name type="scientific">Syntrophotalea carbinolica (strain DSM 2380 / NBRC 103641 / GraBd1)</name>
    <name type="common">Pelobacter carbinolicus</name>
    <dbReference type="NCBI Taxonomy" id="338963"/>
    <lineage>
        <taxon>Bacteria</taxon>
        <taxon>Pseudomonadati</taxon>
        <taxon>Thermodesulfobacteriota</taxon>
        <taxon>Desulfuromonadia</taxon>
        <taxon>Desulfuromonadales</taxon>
        <taxon>Syntrophotaleaceae</taxon>
        <taxon>Syntrophotalea</taxon>
    </lineage>
</organism>
<name>RS16_SYNC1</name>
<protein>
    <recommendedName>
        <fullName evidence="1">Small ribosomal subunit protein bS16</fullName>
    </recommendedName>
    <alternativeName>
        <fullName evidence="2">30S ribosomal protein S16</fullName>
    </alternativeName>
</protein>
<dbReference type="EMBL" id="CP000142">
    <property type="protein sequence ID" value="ABA89463.1"/>
    <property type="molecule type" value="Genomic_DNA"/>
</dbReference>
<dbReference type="RefSeq" id="WP_011341978.1">
    <property type="nucleotide sequence ID" value="NC_007498.2"/>
</dbReference>
<dbReference type="SMR" id="Q3A2E4"/>
<dbReference type="STRING" id="338963.Pcar_2224"/>
<dbReference type="KEGG" id="pca:Pcar_2224"/>
<dbReference type="eggNOG" id="COG0228">
    <property type="taxonomic scope" value="Bacteria"/>
</dbReference>
<dbReference type="HOGENOM" id="CLU_100590_5_0_7"/>
<dbReference type="OrthoDB" id="9807878at2"/>
<dbReference type="Proteomes" id="UP000002534">
    <property type="component" value="Chromosome"/>
</dbReference>
<dbReference type="GO" id="GO:0005737">
    <property type="term" value="C:cytoplasm"/>
    <property type="evidence" value="ECO:0007669"/>
    <property type="project" value="UniProtKB-ARBA"/>
</dbReference>
<dbReference type="GO" id="GO:0015935">
    <property type="term" value="C:small ribosomal subunit"/>
    <property type="evidence" value="ECO:0007669"/>
    <property type="project" value="TreeGrafter"/>
</dbReference>
<dbReference type="GO" id="GO:0003735">
    <property type="term" value="F:structural constituent of ribosome"/>
    <property type="evidence" value="ECO:0007669"/>
    <property type="project" value="InterPro"/>
</dbReference>
<dbReference type="GO" id="GO:0006412">
    <property type="term" value="P:translation"/>
    <property type="evidence" value="ECO:0007669"/>
    <property type="project" value="UniProtKB-UniRule"/>
</dbReference>
<dbReference type="FunFam" id="3.30.1320.10:FF:000010">
    <property type="entry name" value="30S ribosomal protein S16"/>
    <property type="match status" value="1"/>
</dbReference>
<dbReference type="Gene3D" id="3.30.1320.10">
    <property type="match status" value="1"/>
</dbReference>
<dbReference type="HAMAP" id="MF_00385">
    <property type="entry name" value="Ribosomal_bS16"/>
    <property type="match status" value="1"/>
</dbReference>
<dbReference type="InterPro" id="IPR000307">
    <property type="entry name" value="Ribosomal_bS16"/>
</dbReference>
<dbReference type="InterPro" id="IPR020592">
    <property type="entry name" value="Ribosomal_bS16_CS"/>
</dbReference>
<dbReference type="InterPro" id="IPR023803">
    <property type="entry name" value="Ribosomal_bS16_dom_sf"/>
</dbReference>
<dbReference type="NCBIfam" id="TIGR00002">
    <property type="entry name" value="S16"/>
    <property type="match status" value="1"/>
</dbReference>
<dbReference type="PANTHER" id="PTHR12919">
    <property type="entry name" value="30S RIBOSOMAL PROTEIN S16"/>
    <property type="match status" value="1"/>
</dbReference>
<dbReference type="PANTHER" id="PTHR12919:SF20">
    <property type="entry name" value="SMALL RIBOSOMAL SUBUNIT PROTEIN BS16M"/>
    <property type="match status" value="1"/>
</dbReference>
<dbReference type="Pfam" id="PF00886">
    <property type="entry name" value="Ribosomal_S16"/>
    <property type="match status" value="1"/>
</dbReference>
<dbReference type="SUPFAM" id="SSF54565">
    <property type="entry name" value="Ribosomal protein S16"/>
    <property type="match status" value="1"/>
</dbReference>
<dbReference type="PROSITE" id="PS00732">
    <property type="entry name" value="RIBOSOMAL_S16"/>
    <property type="match status" value="1"/>
</dbReference>
<keyword id="KW-1185">Reference proteome</keyword>
<keyword id="KW-0687">Ribonucleoprotein</keyword>
<keyword id="KW-0689">Ribosomal protein</keyword>
<feature type="chain" id="PRO_0000243842" description="Small ribosomal subunit protein bS16">
    <location>
        <begin position="1"/>
        <end position="86"/>
    </location>
</feature>
<evidence type="ECO:0000255" key="1">
    <source>
        <dbReference type="HAMAP-Rule" id="MF_00385"/>
    </source>
</evidence>
<evidence type="ECO:0000305" key="2"/>
<reference key="1">
    <citation type="submission" date="2005-10" db="EMBL/GenBank/DDBJ databases">
        <title>Complete sequence of Pelobacter carbinolicus DSM 2380.</title>
        <authorList>
            <person name="Copeland A."/>
            <person name="Lucas S."/>
            <person name="Lapidus A."/>
            <person name="Barry K."/>
            <person name="Detter J.C."/>
            <person name="Glavina T."/>
            <person name="Hammon N."/>
            <person name="Israni S."/>
            <person name="Pitluck S."/>
            <person name="Chertkov O."/>
            <person name="Schmutz J."/>
            <person name="Larimer F."/>
            <person name="Land M."/>
            <person name="Kyrpides N."/>
            <person name="Ivanova N."/>
            <person name="Richardson P."/>
        </authorList>
    </citation>
    <scope>NUCLEOTIDE SEQUENCE [LARGE SCALE GENOMIC DNA]</scope>
    <source>
        <strain>DSM 2380 / NBRC 103641 / GraBd1</strain>
    </source>
</reference>
<accession>Q3A2E4</accession>
<gene>
    <name evidence="1" type="primary">rpsP</name>
    <name type="ordered locus">Pcar_2224</name>
</gene>
<sequence>MSVKIRLARGGAKKKPFYQVVVADERFPRDGRFIEQLGQYDPRQNPSMVTLKEDKTLEWLNKGAQPTDTVRRLLRTQGVWAKFKQA</sequence>